<name>CAN_SHIFL</name>
<keyword id="KW-0456">Lyase</keyword>
<keyword id="KW-0479">Metal-binding</keyword>
<keyword id="KW-1185">Reference proteome</keyword>
<keyword id="KW-0862">Zinc</keyword>
<sequence length="220" mass="25097">MKDIDTLISNNALWSKMLVEEDPGFFEKLAQAQKPRFLWIGCSDSRVPAERLTGLEPGELFVHRNVANLVIHTDLNCLSVVQYAVDVLEVEHIIICGHYGCGGVQAAVENPELGLINNWLLHIRDIWFKHSSLLGEMPQERRLDTLCELNVMEQVYNLGHSTIMQSAWKRGQKVTIHGWAYGIHDGLLRDLDVTATNRETLEQRYRHGISNLKLKHANHK</sequence>
<evidence type="ECO:0000250" key="1"/>
<evidence type="ECO:0000305" key="2"/>
<dbReference type="EC" id="4.2.1.1"/>
<dbReference type="EMBL" id="AE005674">
    <property type="protein sequence ID" value="AAN41786.1"/>
    <property type="molecule type" value="Genomic_DNA"/>
</dbReference>
<dbReference type="EMBL" id="AE014073">
    <property type="protein sequence ID" value="AAP15667.1"/>
    <property type="molecule type" value="Genomic_DNA"/>
</dbReference>
<dbReference type="RefSeq" id="WP_000651599.1">
    <property type="nucleotide sequence ID" value="NZ_WPGW01000007.1"/>
</dbReference>
<dbReference type="SMR" id="P61518"/>
<dbReference type="STRING" id="198214.SF0123"/>
<dbReference type="PaxDb" id="198214-SF0123"/>
<dbReference type="GeneID" id="93777310"/>
<dbReference type="KEGG" id="sfl:SF0123"/>
<dbReference type="KEGG" id="sfx:S0125"/>
<dbReference type="PATRIC" id="fig|198214.7.peg.139"/>
<dbReference type="HOGENOM" id="CLU_053879_3_0_6"/>
<dbReference type="Proteomes" id="UP000001006">
    <property type="component" value="Chromosome"/>
</dbReference>
<dbReference type="Proteomes" id="UP000002673">
    <property type="component" value="Chromosome"/>
</dbReference>
<dbReference type="GO" id="GO:0004089">
    <property type="term" value="F:carbonate dehydratase activity"/>
    <property type="evidence" value="ECO:0007669"/>
    <property type="project" value="UniProtKB-EC"/>
</dbReference>
<dbReference type="GO" id="GO:0008270">
    <property type="term" value="F:zinc ion binding"/>
    <property type="evidence" value="ECO:0007669"/>
    <property type="project" value="InterPro"/>
</dbReference>
<dbReference type="GO" id="GO:0015976">
    <property type="term" value="P:carbon utilization"/>
    <property type="evidence" value="ECO:0007669"/>
    <property type="project" value="InterPro"/>
</dbReference>
<dbReference type="CDD" id="cd00883">
    <property type="entry name" value="beta_CA_cladeA"/>
    <property type="match status" value="1"/>
</dbReference>
<dbReference type="FunFam" id="3.40.1050.10:FF:000001">
    <property type="entry name" value="Carbonic anhydrase"/>
    <property type="match status" value="1"/>
</dbReference>
<dbReference type="Gene3D" id="3.40.1050.10">
    <property type="entry name" value="Carbonic anhydrase"/>
    <property type="match status" value="1"/>
</dbReference>
<dbReference type="InterPro" id="IPR001765">
    <property type="entry name" value="Carbonic_anhydrase"/>
</dbReference>
<dbReference type="InterPro" id="IPR015892">
    <property type="entry name" value="Carbonic_anhydrase_CS"/>
</dbReference>
<dbReference type="InterPro" id="IPR036874">
    <property type="entry name" value="Carbonic_anhydrase_sf"/>
</dbReference>
<dbReference type="NCBIfam" id="NF007756">
    <property type="entry name" value="PRK10437.1"/>
    <property type="match status" value="1"/>
</dbReference>
<dbReference type="PANTHER" id="PTHR11002">
    <property type="entry name" value="CARBONIC ANHYDRASE"/>
    <property type="match status" value="1"/>
</dbReference>
<dbReference type="PANTHER" id="PTHR11002:SF76">
    <property type="entry name" value="CARBONIC ANHYDRASE"/>
    <property type="match status" value="1"/>
</dbReference>
<dbReference type="Pfam" id="PF00484">
    <property type="entry name" value="Pro_CA"/>
    <property type="match status" value="1"/>
</dbReference>
<dbReference type="SMART" id="SM00947">
    <property type="entry name" value="Pro_CA"/>
    <property type="match status" value="1"/>
</dbReference>
<dbReference type="SUPFAM" id="SSF53056">
    <property type="entry name" value="beta-carbonic anhydrase, cab"/>
    <property type="match status" value="1"/>
</dbReference>
<dbReference type="PROSITE" id="PS00704">
    <property type="entry name" value="PROK_CO2_ANHYDRASE_1"/>
    <property type="match status" value="1"/>
</dbReference>
<dbReference type="PROSITE" id="PS00705">
    <property type="entry name" value="PROK_CO2_ANHYDRASE_2"/>
    <property type="match status" value="1"/>
</dbReference>
<comment type="catalytic activity">
    <reaction>
        <text>hydrogencarbonate + H(+) = CO2 + H2O</text>
        <dbReference type="Rhea" id="RHEA:10748"/>
        <dbReference type="ChEBI" id="CHEBI:15377"/>
        <dbReference type="ChEBI" id="CHEBI:15378"/>
        <dbReference type="ChEBI" id="CHEBI:16526"/>
        <dbReference type="ChEBI" id="CHEBI:17544"/>
        <dbReference type="EC" id="4.2.1.1"/>
    </reaction>
</comment>
<comment type="cofactor">
    <cofactor evidence="1">
        <name>Zn(2+)</name>
        <dbReference type="ChEBI" id="CHEBI:29105"/>
    </cofactor>
    <text evidence="1">Binds 1 zinc ion per subunit.</text>
</comment>
<comment type="subunit">
    <text evidence="1">Homodimer.</text>
</comment>
<comment type="similarity">
    <text evidence="2">Belongs to the beta-class carbonic anhydrase family.</text>
</comment>
<feature type="chain" id="PRO_0000077466" description="Carbonic anhydrase 2">
    <location>
        <begin position="1"/>
        <end position="220"/>
    </location>
</feature>
<feature type="binding site" evidence="1">
    <location>
        <position position="42"/>
    </location>
    <ligand>
        <name>Zn(2+)</name>
        <dbReference type="ChEBI" id="CHEBI:29105"/>
    </ligand>
</feature>
<feature type="binding site" evidence="1">
    <location>
        <position position="44"/>
    </location>
    <ligand>
        <name>Zn(2+)</name>
        <dbReference type="ChEBI" id="CHEBI:29105"/>
    </ligand>
</feature>
<feature type="binding site" evidence="1">
    <location>
        <position position="98"/>
    </location>
    <ligand>
        <name>Zn(2+)</name>
        <dbReference type="ChEBI" id="CHEBI:29105"/>
    </ligand>
</feature>
<feature type="binding site" evidence="1">
    <location>
        <position position="101"/>
    </location>
    <ligand>
        <name>Zn(2+)</name>
        <dbReference type="ChEBI" id="CHEBI:29105"/>
    </ligand>
</feature>
<reference key="1">
    <citation type="journal article" date="2002" name="Nucleic Acids Res.">
        <title>Genome sequence of Shigella flexneri 2a: insights into pathogenicity through comparison with genomes of Escherichia coli K12 and O157.</title>
        <authorList>
            <person name="Jin Q."/>
            <person name="Yuan Z."/>
            <person name="Xu J."/>
            <person name="Wang Y."/>
            <person name="Shen Y."/>
            <person name="Lu W."/>
            <person name="Wang J."/>
            <person name="Liu H."/>
            <person name="Yang J."/>
            <person name="Yang F."/>
            <person name="Zhang X."/>
            <person name="Zhang J."/>
            <person name="Yang G."/>
            <person name="Wu H."/>
            <person name="Qu D."/>
            <person name="Dong J."/>
            <person name="Sun L."/>
            <person name="Xue Y."/>
            <person name="Zhao A."/>
            <person name="Gao Y."/>
            <person name="Zhu J."/>
            <person name="Kan B."/>
            <person name="Ding K."/>
            <person name="Chen S."/>
            <person name="Cheng H."/>
            <person name="Yao Z."/>
            <person name="He B."/>
            <person name="Chen R."/>
            <person name="Ma D."/>
            <person name="Qiang B."/>
            <person name="Wen Y."/>
            <person name="Hou Y."/>
            <person name="Yu J."/>
        </authorList>
    </citation>
    <scope>NUCLEOTIDE SEQUENCE [LARGE SCALE GENOMIC DNA]</scope>
    <source>
        <strain>301 / Serotype 2a</strain>
    </source>
</reference>
<reference key="2">
    <citation type="journal article" date="2003" name="Infect. Immun.">
        <title>Complete genome sequence and comparative genomics of Shigella flexneri serotype 2a strain 2457T.</title>
        <authorList>
            <person name="Wei J."/>
            <person name="Goldberg M.B."/>
            <person name="Burland V."/>
            <person name="Venkatesan M.M."/>
            <person name="Deng W."/>
            <person name="Fournier G."/>
            <person name="Mayhew G.F."/>
            <person name="Plunkett G. III"/>
            <person name="Rose D.J."/>
            <person name="Darling A."/>
            <person name="Mau B."/>
            <person name="Perna N.T."/>
            <person name="Payne S.M."/>
            <person name="Runyen-Janecky L.J."/>
            <person name="Zhou S."/>
            <person name="Schwartz D.C."/>
            <person name="Blattner F.R."/>
        </authorList>
    </citation>
    <scope>NUCLEOTIDE SEQUENCE [LARGE SCALE GENOMIC DNA]</scope>
    <source>
        <strain>ATCC 700930 / 2457T / Serotype 2a</strain>
    </source>
</reference>
<gene>
    <name type="primary">can</name>
    <name type="ordered locus">SF0123</name>
    <name type="ordered locus">S0125</name>
</gene>
<organism>
    <name type="scientific">Shigella flexneri</name>
    <dbReference type="NCBI Taxonomy" id="623"/>
    <lineage>
        <taxon>Bacteria</taxon>
        <taxon>Pseudomonadati</taxon>
        <taxon>Pseudomonadota</taxon>
        <taxon>Gammaproteobacteria</taxon>
        <taxon>Enterobacterales</taxon>
        <taxon>Enterobacteriaceae</taxon>
        <taxon>Shigella</taxon>
    </lineage>
</organism>
<protein>
    <recommendedName>
        <fullName>Carbonic anhydrase 2</fullName>
        <ecNumber>4.2.1.1</ecNumber>
    </recommendedName>
    <alternativeName>
        <fullName>Carbonate dehydratase 2</fullName>
    </alternativeName>
</protein>
<proteinExistence type="inferred from homology"/>
<accession>P61518</accession>
<accession>P36857</accession>
<accession>P75656</accession>
<accession>Q8KJQ4</accession>